<accession>Q895G1</accession>
<gene>
    <name evidence="1" type="primary">cmk</name>
    <name type="ordered locus">CTC_01315</name>
</gene>
<feature type="chain" id="PRO_0000131906" description="Cytidylate kinase">
    <location>
        <begin position="1"/>
        <end position="226"/>
    </location>
</feature>
<feature type="binding site" evidence="1">
    <location>
        <begin position="9"/>
        <end position="17"/>
    </location>
    <ligand>
        <name>ATP</name>
        <dbReference type="ChEBI" id="CHEBI:30616"/>
    </ligand>
</feature>
<sequence length="226" mass="25608">MRVLVAIDGPAGAGKSTIAKLVAKKFNLMYIDTGAMYRAITYLAQNKNITPSNVEGLCNLINSISMYFKDDKIIVNGEDLSEEIRKPNVSSNVSLYASVLEVRTLLVDIQKDLACKYEVVMDGRDIGTVVMPHAPFKFFLTATPEIRADRRYKELKEKSQKVEYKNILEEIIKRDYIDSNRKVSPLKKAKDAIEIDTTNYHIEEVVDKISKLIESTIIKEKGRITK</sequence>
<proteinExistence type="inferred from homology"/>
<comment type="catalytic activity">
    <reaction evidence="1">
        <text>CMP + ATP = CDP + ADP</text>
        <dbReference type="Rhea" id="RHEA:11600"/>
        <dbReference type="ChEBI" id="CHEBI:30616"/>
        <dbReference type="ChEBI" id="CHEBI:58069"/>
        <dbReference type="ChEBI" id="CHEBI:60377"/>
        <dbReference type="ChEBI" id="CHEBI:456216"/>
        <dbReference type="EC" id="2.7.4.25"/>
    </reaction>
</comment>
<comment type="catalytic activity">
    <reaction evidence="1">
        <text>dCMP + ATP = dCDP + ADP</text>
        <dbReference type="Rhea" id="RHEA:25094"/>
        <dbReference type="ChEBI" id="CHEBI:30616"/>
        <dbReference type="ChEBI" id="CHEBI:57566"/>
        <dbReference type="ChEBI" id="CHEBI:58593"/>
        <dbReference type="ChEBI" id="CHEBI:456216"/>
        <dbReference type="EC" id="2.7.4.25"/>
    </reaction>
</comment>
<comment type="subcellular location">
    <subcellularLocation>
        <location evidence="1">Cytoplasm</location>
    </subcellularLocation>
</comment>
<comment type="similarity">
    <text evidence="1">Belongs to the cytidylate kinase family. Type 1 subfamily.</text>
</comment>
<reference key="1">
    <citation type="journal article" date="2003" name="Proc. Natl. Acad. Sci. U.S.A.">
        <title>The genome sequence of Clostridium tetani, the causative agent of tetanus disease.</title>
        <authorList>
            <person name="Brueggemann H."/>
            <person name="Baeumer S."/>
            <person name="Fricke W.F."/>
            <person name="Wiezer A."/>
            <person name="Liesegang H."/>
            <person name="Decker I."/>
            <person name="Herzberg C."/>
            <person name="Martinez-Arias R."/>
            <person name="Merkl R."/>
            <person name="Henne A."/>
            <person name="Gottschalk G."/>
        </authorList>
    </citation>
    <scope>NUCLEOTIDE SEQUENCE [LARGE SCALE GENOMIC DNA]</scope>
    <source>
        <strain>Massachusetts / E88</strain>
    </source>
</reference>
<evidence type="ECO:0000255" key="1">
    <source>
        <dbReference type="HAMAP-Rule" id="MF_00238"/>
    </source>
</evidence>
<organism>
    <name type="scientific">Clostridium tetani (strain Massachusetts / E88)</name>
    <dbReference type="NCBI Taxonomy" id="212717"/>
    <lineage>
        <taxon>Bacteria</taxon>
        <taxon>Bacillati</taxon>
        <taxon>Bacillota</taxon>
        <taxon>Clostridia</taxon>
        <taxon>Eubacteriales</taxon>
        <taxon>Clostridiaceae</taxon>
        <taxon>Clostridium</taxon>
    </lineage>
</organism>
<dbReference type="EC" id="2.7.4.25" evidence="1"/>
<dbReference type="EMBL" id="AE015927">
    <property type="protein sequence ID" value="AAO35879.1"/>
    <property type="molecule type" value="Genomic_DNA"/>
</dbReference>
<dbReference type="RefSeq" id="WP_011099541.1">
    <property type="nucleotide sequence ID" value="NC_004557.1"/>
</dbReference>
<dbReference type="SMR" id="Q895G1"/>
<dbReference type="STRING" id="212717.CTC_01315"/>
<dbReference type="GeneID" id="24255139"/>
<dbReference type="KEGG" id="ctc:CTC_01315"/>
<dbReference type="HOGENOM" id="CLU_079959_0_2_9"/>
<dbReference type="OrthoDB" id="9807434at2"/>
<dbReference type="Proteomes" id="UP000001412">
    <property type="component" value="Chromosome"/>
</dbReference>
<dbReference type="GO" id="GO:0005829">
    <property type="term" value="C:cytosol"/>
    <property type="evidence" value="ECO:0007669"/>
    <property type="project" value="TreeGrafter"/>
</dbReference>
<dbReference type="GO" id="GO:0005524">
    <property type="term" value="F:ATP binding"/>
    <property type="evidence" value="ECO:0007669"/>
    <property type="project" value="UniProtKB-UniRule"/>
</dbReference>
<dbReference type="GO" id="GO:0036430">
    <property type="term" value="F:CMP kinase activity"/>
    <property type="evidence" value="ECO:0007669"/>
    <property type="project" value="RHEA"/>
</dbReference>
<dbReference type="GO" id="GO:0036431">
    <property type="term" value="F:dCMP kinase activity"/>
    <property type="evidence" value="ECO:0007669"/>
    <property type="project" value="RHEA"/>
</dbReference>
<dbReference type="GO" id="GO:0015949">
    <property type="term" value="P:nucleobase-containing small molecule interconversion"/>
    <property type="evidence" value="ECO:0007669"/>
    <property type="project" value="TreeGrafter"/>
</dbReference>
<dbReference type="GO" id="GO:0006220">
    <property type="term" value="P:pyrimidine nucleotide metabolic process"/>
    <property type="evidence" value="ECO:0007669"/>
    <property type="project" value="UniProtKB-UniRule"/>
</dbReference>
<dbReference type="CDD" id="cd02020">
    <property type="entry name" value="CMPK"/>
    <property type="match status" value="1"/>
</dbReference>
<dbReference type="Gene3D" id="3.40.50.300">
    <property type="entry name" value="P-loop containing nucleotide triphosphate hydrolases"/>
    <property type="match status" value="1"/>
</dbReference>
<dbReference type="HAMAP" id="MF_00238">
    <property type="entry name" value="Cytidyl_kinase_type1"/>
    <property type="match status" value="1"/>
</dbReference>
<dbReference type="InterPro" id="IPR003136">
    <property type="entry name" value="Cytidylate_kin"/>
</dbReference>
<dbReference type="InterPro" id="IPR011994">
    <property type="entry name" value="Cytidylate_kinase_dom"/>
</dbReference>
<dbReference type="InterPro" id="IPR027417">
    <property type="entry name" value="P-loop_NTPase"/>
</dbReference>
<dbReference type="NCBIfam" id="TIGR00017">
    <property type="entry name" value="cmk"/>
    <property type="match status" value="1"/>
</dbReference>
<dbReference type="PANTHER" id="PTHR21299:SF2">
    <property type="entry name" value="CYTIDYLATE KINASE"/>
    <property type="match status" value="1"/>
</dbReference>
<dbReference type="PANTHER" id="PTHR21299">
    <property type="entry name" value="CYTIDYLATE KINASE/PANTOATE-BETA-ALANINE LIGASE"/>
    <property type="match status" value="1"/>
</dbReference>
<dbReference type="Pfam" id="PF02224">
    <property type="entry name" value="Cytidylate_kin"/>
    <property type="match status" value="1"/>
</dbReference>
<dbReference type="SUPFAM" id="SSF52540">
    <property type="entry name" value="P-loop containing nucleoside triphosphate hydrolases"/>
    <property type="match status" value="1"/>
</dbReference>
<name>KCY_CLOTE</name>
<keyword id="KW-0067">ATP-binding</keyword>
<keyword id="KW-0963">Cytoplasm</keyword>
<keyword id="KW-0418">Kinase</keyword>
<keyword id="KW-0547">Nucleotide-binding</keyword>
<keyword id="KW-1185">Reference proteome</keyword>
<keyword id="KW-0808">Transferase</keyword>
<protein>
    <recommendedName>
        <fullName evidence="1">Cytidylate kinase</fullName>
        <shortName evidence="1">CK</shortName>
        <ecNumber evidence="1">2.7.4.25</ecNumber>
    </recommendedName>
    <alternativeName>
        <fullName evidence="1">Cytidine monophosphate kinase</fullName>
        <shortName evidence="1">CMP kinase</shortName>
    </alternativeName>
</protein>